<sequence>MSFMDNLFNMADKKELKKFNKTVDIIDSLEPKFESMADSELKNMTNIFKERLANGESIDDILPEAFAVVREVSKRVLGLRHYRVQMIGGIVLHQGRIAEMKTGEGKTLVATAPVYLNALTGKGVHVVTVNDYLAKRDRDQMAKIYEFLGMSVGVIIHGQNPKVRKEQYDCDITYGTNNEYGFDYLKDNMVIHKEQRVQRGLNYAIVDEVDSILIDEARTPLIISGPGDKSTHLYSDANTFVLTLKPDDYELEEKDKAVSLTASGIQKAEVYFNVDNITDISHTELYHHINQALRAHVIMKKDVDYVAKDGEIVIVDEFTGRLMFGRRYSEGLHQAIEAKEGLKIQRESKTLATVTFQNYFRMYKKLSGMTGTAKTEEEEFKAIYKMDVFQVPTNKLMIREDLPDCVYKSEIGKFNAVAQEIIERHKVNQPILVGTVSIEKSELLSQILKKKGIKHEVLNAKHHDKEAEIIAQAGRLGAVTIATNMAGRGTDIVLGGNPDFLTKREMRRNGFKEEIVNRVDTPIEGIPVKGNEILFEAREEYEKLFEKFKQQTQEEQKQVVEAGGLAIIGTERHESRRIDNQLRGRAGRQGDPGSSRFYIGLDDDLMRLFGSDRISGIVDKIGLEEDMPIEHRILSKSIEGAQKKVEGKNFGIRKHVLQYDDVMNKQREIIYAERKRVLEGEDLQEQIQSMTHSIIEEAVTLYTQDKGFDEEGFKEHMYNLFLPKGSIEIPEIEKLNPVEITEKVYEIAMKIYTSKEEQVGYERMREVERVILLQAVDNHWIDHIDAMDQLRQGIGLRAVGQQDPVIAYKMEGFDMFDEMNKHIKEDTVRYLFNITIETPVERKAVVDVENLSSPSDGTLPTSKTVKKDEKVGRNDLCPCGSGKKYKNCCGR</sequence>
<protein>
    <recommendedName>
        <fullName evidence="1">Protein translocase subunit SecA 1</fullName>
        <ecNumber evidence="1">7.4.2.8</ecNumber>
    </recommendedName>
</protein>
<organism>
    <name type="scientific">Clostridioides difficile (strain 630)</name>
    <name type="common">Peptoclostridium difficile</name>
    <dbReference type="NCBI Taxonomy" id="272563"/>
    <lineage>
        <taxon>Bacteria</taxon>
        <taxon>Bacillati</taxon>
        <taxon>Bacillota</taxon>
        <taxon>Clostridia</taxon>
        <taxon>Peptostreptococcales</taxon>
        <taxon>Peptostreptococcaceae</taxon>
        <taxon>Clostridioides</taxon>
    </lineage>
</organism>
<proteinExistence type="inferred from homology"/>
<accession>Q18CN0</accession>
<feature type="chain" id="PRO_0000320780" description="Protein translocase subunit SecA 1">
    <location>
        <begin position="1"/>
        <end position="891"/>
    </location>
</feature>
<feature type="binding site" evidence="1">
    <location>
        <position position="85"/>
    </location>
    <ligand>
        <name>ATP</name>
        <dbReference type="ChEBI" id="CHEBI:30616"/>
    </ligand>
</feature>
<feature type="binding site" evidence="1">
    <location>
        <begin position="103"/>
        <end position="107"/>
    </location>
    <ligand>
        <name>ATP</name>
        <dbReference type="ChEBI" id="CHEBI:30616"/>
    </ligand>
</feature>
<feature type="binding site" evidence="1">
    <location>
        <position position="491"/>
    </location>
    <ligand>
        <name>ATP</name>
        <dbReference type="ChEBI" id="CHEBI:30616"/>
    </ligand>
</feature>
<feature type="binding site" evidence="1">
    <location>
        <position position="877"/>
    </location>
    <ligand>
        <name>Zn(2+)</name>
        <dbReference type="ChEBI" id="CHEBI:29105"/>
    </ligand>
</feature>
<feature type="binding site" evidence="1">
    <location>
        <position position="879"/>
    </location>
    <ligand>
        <name>Zn(2+)</name>
        <dbReference type="ChEBI" id="CHEBI:29105"/>
    </ligand>
</feature>
<feature type="binding site" evidence="1">
    <location>
        <position position="888"/>
    </location>
    <ligand>
        <name>Zn(2+)</name>
        <dbReference type="ChEBI" id="CHEBI:29105"/>
    </ligand>
</feature>
<feature type="binding site" evidence="1">
    <location>
        <position position="889"/>
    </location>
    <ligand>
        <name>Zn(2+)</name>
        <dbReference type="ChEBI" id="CHEBI:29105"/>
    </ligand>
</feature>
<reference key="1">
    <citation type="journal article" date="2006" name="Nat. Genet.">
        <title>The multidrug-resistant human pathogen Clostridium difficile has a highly mobile, mosaic genome.</title>
        <authorList>
            <person name="Sebaihia M."/>
            <person name="Wren B.W."/>
            <person name="Mullany P."/>
            <person name="Fairweather N.F."/>
            <person name="Minton N."/>
            <person name="Stabler R."/>
            <person name="Thomson N.R."/>
            <person name="Roberts A.P."/>
            <person name="Cerdeno-Tarraga A.M."/>
            <person name="Wang H."/>
            <person name="Holden M.T.G."/>
            <person name="Wright A."/>
            <person name="Churcher C."/>
            <person name="Quail M.A."/>
            <person name="Baker S."/>
            <person name="Bason N."/>
            <person name="Brooks K."/>
            <person name="Chillingworth T."/>
            <person name="Cronin A."/>
            <person name="Davis P."/>
            <person name="Dowd L."/>
            <person name="Fraser A."/>
            <person name="Feltwell T."/>
            <person name="Hance Z."/>
            <person name="Holroyd S."/>
            <person name="Jagels K."/>
            <person name="Moule S."/>
            <person name="Mungall K."/>
            <person name="Price C."/>
            <person name="Rabbinowitsch E."/>
            <person name="Sharp S."/>
            <person name="Simmonds M."/>
            <person name="Stevens K."/>
            <person name="Unwin L."/>
            <person name="Whithead S."/>
            <person name="Dupuy B."/>
            <person name="Dougan G."/>
            <person name="Barrell B."/>
            <person name="Parkhill J."/>
        </authorList>
    </citation>
    <scope>NUCLEOTIDE SEQUENCE [LARGE SCALE GENOMIC DNA]</scope>
    <source>
        <strain>630</strain>
    </source>
</reference>
<evidence type="ECO:0000255" key="1">
    <source>
        <dbReference type="HAMAP-Rule" id="MF_01382"/>
    </source>
</evidence>
<keyword id="KW-0067">ATP-binding</keyword>
<keyword id="KW-1003">Cell membrane</keyword>
<keyword id="KW-0963">Cytoplasm</keyword>
<keyword id="KW-0472">Membrane</keyword>
<keyword id="KW-0479">Metal-binding</keyword>
<keyword id="KW-0547">Nucleotide-binding</keyword>
<keyword id="KW-0653">Protein transport</keyword>
<keyword id="KW-1185">Reference proteome</keyword>
<keyword id="KW-1278">Translocase</keyword>
<keyword id="KW-0811">Translocation</keyword>
<keyword id="KW-0813">Transport</keyword>
<keyword id="KW-0862">Zinc</keyword>
<dbReference type="EC" id="7.4.2.8" evidence="1"/>
<dbReference type="EMBL" id="AM180355">
    <property type="protein sequence ID" value="CAJ66963.1"/>
    <property type="molecule type" value="Genomic_DNA"/>
</dbReference>
<dbReference type="RefSeq" id="YP_001086612.1">
    <property type="nucleotide sequence ID" value="NC_009089.1"/>
</dbReference>
<dbReference type="SMR" id="Q18CN0"/>
<dbReference type="STRING" id="272563.CD630_01430"/>
<dbReference type="EnsemblBacteria" id="CAJ66963">
    <property type="protein sequence ID" value="CAJ66963"/>
    <property type="gene ID" value="CD630_01430"/>
</dbReference>
<dbReference type="KEGG" id="cdf:CD630_01430"/>
<dbReference type="KEGG" id="pdc:CDIF630_00260"/>
<dbReference type="PATRIC" id="fig|272563.120.peg.156"/>
<dbReference type="eggNOG" id="COG0653">
    <property type="taxonomic scope" value="Bacteria"/>
</dbReference>
<dbReference type="OrthoDB" id="9805579at2"/>
<dbReference type="PhylomeDB" id="Q18CN0"/>
<dbReference type="BioCyc" id="PDIF272563:G12WB-247-MONOMER"/>
<dbReference type="Proteomes" id="UP000001978">
    <property type="component" value="Chromosome"/>
</dbReference>
<dbReference type="GO" id="GO:0031522">
    <property type="term" value="C:cell envelope Sec protein transport complex"/>
    <property type="evidence" value="ECO:0007669"/>
    <property type="project" value="TreeGrafter"/>
</dbReference>
<dbReference type="GO" id="GO:0005829">
    <property type="term" value="C:cytosol"/>
    <property type="evidence" value="ECO:0007669"/>
    <property type="project" value="TreeGrafter"/>
</dbReference>
<dbReference type="GO" id="GO:0005886">
    <property type="term" value="C:plasma membrane"/>
    <property type="evidence" value="ECO:0007669"/>
    <property type="project" value="UniProtKB-SubCell"/>
</dbReference>
<dbReference type="GO" id="GO:0005524">
    <property type="term" value="F:ATP binding"/>
    <property type="evidence" value="ECO:0007669"/>
    <property type="project" value="UniProtKB-UniRule"/>
</dbReference>
<dbReference type="GO" id="GO:0046872">
    <property type="term" value="F:metal ion binding"/>
    <property type="evidence" value="ECO:0007669"/>
    <property type="project" value="UniProtKB-KW"/>
</dbReference>
<dbReference type="GO" id="GO:0008564">
    <property type="term" value="F:protein-exporting ATPase activity"/>
    <property type="evidence" value="ECO:0007669"/>
    <property type="project" value="UniProtKB-EC"/>
</dbReference>
<dbReference type="GO" id="GO:0065002">
    <property type="term" value="P:intracellular protein transmembrane transport"/>
    <property type="evidence" value="ECO:0007669"/>
    <property type="project" value="UniProtKB-UniRule"/>
</dbReference>
<dbReference type="GO" id="GO:0017038">
    <property type="term" value="P:protein import"/>
    <property type="evidence" value="ECO:0007669"/>
    <property type="project" value="InterPro"/>
</dbReference>
<dbReference type="GO" id="GO:0006605">
    <property type="term" value="P:protein targeting"/>
    <property type="evidence" value="ECO:0007669"/>
    <property type="project" value="UniProtKB-UniRule"/>
</dbReference>
<dbReference type="GO" id="GO:0043952">
    <property type="term" value="P:protein transport by the Sec complex"/>
    <property type="evidence" value="ECO:0007669"/>
    <property type="project" value="TreeGrafter"/>
</dbReference>
<dbReference type="CDD" id="cd17928">
    <property type="entry name" value="DEXDc_SecA"/>
    <property type="match status" value="1"/>
</dbReference>
<dbReference type="CDD" id="cd18803">
    <property type="entry name" value="SF2_C_secA"/>
    <property type="match status" value="1"/>
</dbReference>
<dbReference type="FunFam" id="3.40.50.300:FF:000113">
    <property type="entry name" value="Preprotein translocase subunit SecA"/>
    <property type="match status" value="1"/>
</dbReference>
<dbReference type="FunFam" id="3.90.1440.10:FF:000001">
    <property type="entry name" value="Preprotein translocase subunit SecA"/>
    <property type="match status" value="1"/>
</dbReference>
<dbReference type="FunFam" id="3.40.50.300:FF:000334">
    <property type="entry name" value="Protein translocase subunit SecA"/>
    <property type="match status" value="1"/>
</dbReference>
<dbReference type="Gene3D" id="1.10.3060.10">
    <property type="entry name" value="Helical scaffold and wing domains of SecA"/>
    <property type="match status" value="1"/>
</dbReference>
<dbReference type="Gene3D" id="3.40.50.300">
    <property type="entry name" value="P-loop containing nucleotide triphosphate hydrolases"/>
    <property type="match status" value="2"/>
</dbReference>
<dbReference type="Gene3D" id="3.90.1440.10">
    <property type="entry name" value="SecA, preprotein cross-linking domain"/>
    <property type="match status" value="1"/>
</dbReference>
<dbReference type="HAMAP" id="MF_01382">
    <property type="entry name" value="SecA"/>
    <property type="match status" value="1"/>
</dbReference>
<dbReference type="InterPro" id="IPR014001">
    <property type="entry name" value="Helicase_ATP-bd"/>
</dbReference>
<dbReference type="InterPro" id="IPR027417">
    <property type="entry name" value="P-loop_NTPase"/>
</dbReference>
<dbReference type="InterPro" id="IPR004027">
    <property type="entry name" value="SEC_C_motif"/>
</dbReference>
<dbReference type="InterPro" id="IPR000185">
    <property type="entry name" value="SecA"/>
</dbReference>
<dbReference type="InterPro" id="IPR020937">
    <property type="entry name" value="SecA_CS"/>
</dbReference>
<dbReference type="InterPro" id="IPR011115">
    <property type="entry name" value="SecA_DEAD"/>
</dbReference>
<dbReference type="InterPro" id="IPR014018">
    <property type="entry name" value="SecA_motor_DEAD"/>
</dbReference>
<dbReference type="InterPro" id="IPR011130">
    <property type="entry name" value="SecA_preprotein_X-link_dom"/>
</dbReference>
<dbReference type="InterPro" id="IPR044722">
    <property type="entry name" value="SecA_SF2_C"/>
</dbReference>
<dbReference type="InterPro" id="IPR011116">
    <property type="entry name" value="SecA_Wing/Scaffold"/>
</dbReference>
<dbReference type="InterPro" id="IPR036266">
    <property type="entry name" value="SecA_Wing/Scaffold_sf"/>
</dbReference>
<dbReference type="InterPro" id="IPR036670">
    <property type="entry name" value="SecA_X-link_sf"/>
</dbReference>
<dbReference type="NCBIfam" id="NF009538">
    <property type="entry name" value="PRK12904.1"/>
    <property type="match status" value="1"/>
</dbReference>
<dbReference type="NCBIfam" id="TIGR00963">
    <property type="entry name" value="secA"/>
    <property type="match status" value="1"/>
</dbReference>
<dbReference type="PANTHER" id="PTHR30612:SF0">
    <property type="entry name" value="CHLOROPLAST PROTEIN-TRANSPORTING ATPASE"/>
    <property type="match status" value="1"/>
</dbReference>
<dbReference type="PANTHER" id="PTHR30612">
    <property type="entry name" value="SECA INNER MEMBRANE COMPONENT OF SEC PROTEIN SECRETION SYSTEM"/>
    <property type="match status" value="1"/>
</dbReference>
<dbReference type="Pfam" id="PF21090">
    <property type="entry name" value="P-loop_SecA"/>
    <property type="match status" value="1"/>
</dbReference>
<dbReference type="Pfam" id="PF02810">
    <property type="entry name" value="SEC-C"/>
    <property type="match status" value="1"/>
</dbReference>
<dbReference type="Pfam" id="PF07517">
    <property type="entry name" value="SecA_DEAD"/>
    <property type="match status" value="1"/>
</dbReference>
<dbReference type="Pfam" id="PF01043">
    <property type="entry name" value="SecA_PP_bind"/>
    <property type="match status" value="1"/>
</dbReference>
<dbReference type="Pfam" id="PF07516">
    <property type="entry name" value="SecA_SW"/>
    <property type="match status" value="1"/>
</dbReference>
<dbReference type="PRINTS" id="PR00906">
    <property type="entry name" value="SECA"/>
</dbReference>
<dbReference type="SMART" id="SM00957">
    <property type="entry name" value="SecA_DEAD"/>
    <property type="match status" value="1"/>
</dbReference>
<dbReference type="SMART" id="SM00958">
    <property type="entry name" value="SecA_PP_bind"/>
    <property type="match status" value="1"/>
</dbReference>
<dbReference type="SUPFAM" id="SSF81886">
    <property type="entry name" value="Helical scaffold and wing domains of SecA"/>
    <property type="match status" value="1"/>
</dbReference>
<dbReference type="SUPFAM" id="SSF52540">
    <property type="entry name" value="P-loop containing nucleoside triphosphate hydrolases"/>
    <property type="match status" value="2"/>
</dbReference>
<dbReference type="SUPFAM" id="SSF81767">
    <property type="entry name" value="Pre-protein crosslinking domain of SecA"/>
    <property type="match status" value="1"/>
</dbReference>
<dbReference type="PROSITE" id="PS01312">
    <property type="entry name" value="SECA"/>
    <property type="match status" value="1"/>
</dbReference>
<dbReference type="PROSITE" id="PS51196">
    <property type="entry name" value="SECA_MOTOR_DEAD"/>
    <property type="match status" value="1"/>
</dbReference>
<comment type="function">
    <text evidence="1">Part of the Sec protein translocase complex. Interacts with the SecYEG preprotein conducting channel. Has a central role in coupling the hydrolysis of ATP to the transfer of proteins into and across the cell membrane, serving as an ATP-driven molecular motor driving the stepwise translocation of polypeptide chains across the membrane.</text>
</comment>
<comment type="catalytic activity">
    <reaction evidence="1">
        <text>ATP + H2O + cellular proteinSide 1 = ADP + phosphate + cellular proteinSide 2.</text>
        <dbReference type="EC" id="7.4.2.8"/>
    </reaction>
</comment>
<comment type="cofactor">
    <cofactor evidence="1">
        <name>Zn(2+)</name>
        <dbReference type="ChEBI" id="CHEBI:29105"/>
    </cofactor>
    <text evidence="1">May bind 1 zinc ion per subunit.</text>
</comment>
<comment type="subunit">
    <text evidence="1">Monomer and homodimer. Part of the essential Sec protein translocation apparatus which comprises SecA, SecYEG and auxiliary proteins SecDF. Other proteins may also be involved.</text>
</comment>
<comment type="subcellular location">
    <subcellularLocation>
        <location evidence="1">Cell membrane</location>
        <topology evidence="1">Peripheral membrane protein</topology>
        <orientation evidence="1">Cytoplasmic side</orientation>
    </subcellularLocation>
    <subcellularLocation>
        <location evidence="1">Cytoplasm</location>
    </subcellularLocation>
    <text evidence="1">Distribution is 50-50.</text>
</comment>
<comment type="similarity">
    <text evidence="1">Belongs to the SecA family.</text>
</comment>
<gene>
    <name evidence="1" type="primary">secA1</name>
    <name type="ordered locus">CD630_01430</name>
</gene>
<name>SECA1_CLOD6</name>